<dbReference type="EMBL" id="CP000802">
    <property type="protein sequence ID" value="ABV05071.1"/>
    <property type="molecule type" value="Genomic_DNA"/>
</dbReference>
<dbReference type="RefSeq" id="WP_001269673.1">
    <property type="nucleotide sequence ID" value="NC_009800.1"/>
</dbReference>
<dbReference type="SMR" id="A7ZXR7"/>
<dbReference type="GeneID" id="93776841"/>
<dbReference type="KEGG" id="ecx:EcHS_A0693"/>
<dbReference type="HOGENOM" id="CLU_103309_1_1_6"/>
<dbReference type="GO" id="GO:0009279">
    <property type="term" value="C:cell outer membrane"/>
    <property type="evidence" value="ECO:0007669"/>
    <property type="project" value="UniProtKB-SubCell"/>
</dbReference>
<dbReference type="GO" id="GO:1990351">
    <property type="term" value="C:transporter complex"/>
    <property type="evidence" value="ECO:0007669"/>
    <property type="project" value="TreeGrafter"/>
</dbReference>
<dbReference type="GO" id="GO:0001530">
    <property type="term" value="F:lipopolysaccharide binding"/>
    <property type="evidence" value="ECO:0007669"/>
    <property type="project" value="TreeGrafter"/>
</dbReference>
<dbReference type="GO" id="GO:0043165">
    <property type="term" value="P:Gram-negative-bacterium-type cell outer membrane assembly"/>
    <property type="evidence" value="ECO:0007669"/>
    <property type="project" value="UniProtKB-UniRule"/>
</dbReference>
<dbReference type="GO" id="GO:0015920">
    <property type="term" value="P:lipopolysaccharide transport"/>
    <property type="evidence" value="ECO:0007669"/>
    <property type="project" value="TreeGrafter"/>
</dbReference>
<dbReference type="FunFam" id="3.30.160.150:FF:000001">
    <property type="entry name" value="LPS-assembly lipoprotein LptE"/>
    <property type="match status" value="1"/>
</dbReference>
<dbReference type="Gene3D" id="3.30.160.150">
    <property type="entry name" value="Lipoprotein like domain"/>
    <property type="match status" value="1"/>
</dbReference>
<dbReference type="HAMAP" id="MF_01186">
    <property type="entry name" value="LPS_assembly_LptE"/>
    <property type="match status" value="1"/>
</dbReference>
<dbReference type="InterPro" id="IPR007485">
    <property type="entry name" value="LPS_assembly_LptE"/>
</dbReference>
<dbReference type="NCBIfam" id="NF008062">
    <property type="entry name" value="PRK10796.1"/>
    <property type="match status" value="1"/>
</dbReference>
<dbReference type="PANTHER" id="PTHR38098">
    <property type="entry name" value="LPS-ASSEMBLY LIPOPROTEIN LPTE"/>
    <property type="match status" value="1"/>
</dbReference>
<dbReference type="PANTHER" id="PTHR38098:SF1">
    <property type="entry name" value="LPS-ASSEMBLY LIPOPROTEIN LPTE"/>
    <property type="match status" value="1"/>
</dbReference>
<dbReference type="Pfam" id="PF04390">
    <property type="entry name" value="LptE"/>
    <property type="match status" value="1"/>
</dbReference>
<dbReference type="PROSITE" id="PS51257">
    <property type="entry name" value="PROKAR_LIPOPROTEIN"/>
    <property type="match status" value="1"/>
</dbReference>
<gene>
    <name evidence="1" type="primary">lptE</name>
    <name type="synonym">rlpB</name>
    <name type="ordered locus">EcHS_A0693</name>
</gene>
<evidence type="ECO:0000255" key="1">
    <source>
        <dbReference type="HAMAP-Rule" id="MF_01186"/>
    </source>
</evidence>
<evidence type="ECO:0000256" key="2">
    <source>
        <dbReference type="SAM" id="MobiDB-lite"/>
    </source>
</evidence>
<comment type="function">
    <text evidence="1">Together with LptD, is involved in the assembly of lipopolysaccharide (LPS) at the surface of the outer membrane. Required for the proper assembly of LptD. Binds LPS and may serve as the LPS recognition site at the outer membrane.</text>
</comment>
<comment type="subunit">
    <text evidence="1">Component of the lipopolysaccharide transport and assembly complex. Interacts with LptD.</text>
</comment>
<comment type="subcellular location">
    <subcellularLocation>
        <location evidence="1">Cell outer membrane</location>
        <topology evidence="1">Lipid-anchor</topology>
    </subcellularLocation>
</comment>
<comment type="similarity">
    <text evidence="1">Belongs to the LptE lipoprotein family.</text>
</comment>
<organism>
    <name type="scientific">Escherichia coli O9:H4 (strain HS)</name>
    <dbReference type="NCBI Taxonomy" id="331112"/>
    <lineage>
        <taxon>Bacteria</taxon>
        <taxon>Pseudomonadati</taxon>
        <taxon>Pseudomonadota</taxon>
        <taxon>Gammaproteobacteria</taxon>
        <taxon>Enterobacterales</taxon>
        <taxon>Enterobacteriaceae</taxon>
        <taxon>Escherichia</taxon>
    </lineage>
</organism>
<feature type="signal peptide" evidence="1">
    <location>
        <begin position="1"/>
        <end position="18"/>
    </location>
</feature>
<feature type="chain" id="PRO_1000065825" description="LPS-assembly lipoprotein LptE">
    <location>
        <begin position="19"/>
        <end position="193"/>
    </location>
</feature>
<feature type="region of interest" description="Disordered" evidence="2">
    <location>
        <begin position="166"/>
        <end position="193"/>
    </location>
</feature>
<feature type="compositionally biased region" description="Low complexity" evidence="2">
    <location>
        <begin position="174"/>
        <end position="186"/>
    </location>
</feature>
<feature type="lipid moiety-binding region" description="N-palmitoyl cysteine" evidence="1">
    <location>
        <position position="19"/>
    </location>
</feature>
<feature type="lipid moiety-binding region" description="S-diacylglycerol cysteine" evidence="1">
    <location>
        <position position="19"/>
    </location>
</feature>
<reference key="1">
    <citation type="journal article" date="2008" name="J. Bacteriol.">
        <title>The pangenome structure of Escherichia coli: comparative genomic analysis of E. coli commensal and pathogenic isolates.</title>
        <authorList>
            <person name="Rasko D.A."/>
            <person name="Rosovitz M.J."/>
            <person name="Myers G.S.A."/>
            <person name="Mongodin E.F."/>
            <person name="Fricke W.F."/>
            <person name="Gajer P."/>
            <person name="Crabtree J."/>
            <person name="Sebaihia M."/>
            <person name="Thomson N.R."/>
            <person name="Chaudhuri R."/>
            <person name="Henderson I.R."/>
            <person name="Sperandio V."/>
            <person name="Ravel J."/>
        </authorList>
    </citation>
    <scope>NUCLEOTIDE SEQUENCE [LARGE SCALE GENOMIC DNA]</scope>
    <source>
        <strain>HS</strain>
    </source>
</reference>
<proteinExistence type="inferred from homology"/>
<sequence length="193" mass="21357">MRYLATLLLSLAVLITAGCGWHLRDTTQVPSTMKVMILDSGDPNGPLSRAVRNQLRLNGVELLDKETTRKDVPSLRLGKVSIAKDTASVFRNGQTAEYQMIMTVNATVLIPGRDIYPISAKVFRSFFDNPQMALAKDNEQDMIVKEMYDRAAEQLIRKLPSIRAADIRSDEEQTSTTTDTPATPARVSTTLGN</sequence>
<accession>A7ZXR7</accession>
<keyword id="KW-0998">Cell outer membrane</keyword>
<keyword id="KW-0449">Lipoprotein</keyword>
<keyword id="KW-0472">Membrane</keyword>
<keyword id="KW-0564">Palmitate</keyword>
<keyword id="KW-0732">Signal</keyword>
<protein>
    <recommendedName>
        <fullName evidence="1">LPS-assembly lipoprotein LptE</fullName>
    </recommendedName>
</protein>
<name>LPTE_ECOHS</name>